<proteinExistence type="inferred from homology"/>
<accession>A7FNK2</accession>
<comment type="function">
    <text evidence="1">Removes the formyl group from the N-terminal Met of newly synthesized proteins. Requires at least a dipeptide for an efficient rate of reaction. N-terminal L-methionine is a prerequisite for activity but the enzyme has broad specificity at other positions.</text>
</comment>
<comment type="catalytic activity">
    <reaction evidence="1">
        <text>N-terminal N-formyl-L-methionyl-[peptide] + H2O = N-terminal L-methionyl-[peptide] + formate</text>
        <dbReference type="Rhea" id="RHEA:24420"/>
        <dbReference type="Rhea" id="RHEA-COMP:10639"/>
        <dbReference type="Rhea" id="RHEA-COMP:10640"/>
        <dbReference type="ChEBI" id="CHEBI:15377"/>
        <dbReference type="ChEBI" id="CHEBI:15740"/>
        <dbReference type="ChEBI" id="CHEBI:49298"/>
        <dbReference type="ChEBI" id="CHEBI:64731"/>
        <dbReference type="EC" id="3.5.1.88"/>
    </reaction>
</comment>
<comment type="cofactor">
    <cofactor evidence="1">
        <name>Fe(2+)</name>
        <dbReference type="ChEBI" id="CHEBI:29033"/>
    </cofactor>
    <text evidence="1">Binds 1 Fe(2+) ion.</text>
</comment>
<comment type="similarity">
    <text evidence="1">Belongs to the polypeptide deformylase family.</text>
</comment>
<reference key="1">
    <citation type="journal article" date="2007" name="PLoS Genet.">
        <title>The complete genome sequence of Yersinia pseudotuberculosis IP31758, the causative agent of Far East scarlet-like fever.</title>
        <authorList>
            <person name="Eppinger M."/>
            <person name="Rosovitz M.J."/>
            <person name="Fricke W.F."/>
            <person name="Rasko D.A."/>
            <person name="Kokorina G."/>
            <person name="Fayolle C."/>
            <person name="Lindler L.E."/>
            <person name="Carniel E."/>
            <person name="Ravel J."/>
        </authorList>
    </citation>
    <scope>NUCLEOTIDE SEQUENCE [LARGE SCALE GENOMIC DNA]</scope>
    <source>
        <strain>IP 31758</strain>
    </source>
</reference>
<keyword id="KW-0378">Hydrolase</keyword>
<keyword id="KW-0408">Iron</keyword>
<keyword id="KW-0479">Metal-binding</keyword>
<keyword id="KW-0648">Protein biosynthesis</keyword>
<evidence type="ECO:0000255" key="1">
    <source>
        <dbReference type="HAMAP-Rule" id="MF_00163"/>
    </source>
</evidence>
<feature type="chain" id="PRO_1000058247" description="Peptide deformylase">
    <location>
        <begin position="1"/>
        <end position="170"/>
    </location>
</feature>
<feature type="active site" evidence="1">
    <location>
        <position position="134"/>
    </location>
</feature>
<feature type="binding site" evidence="1">
    <location>
        <position position="91"/>
    </location>
    <ligand>
        <name>Fe cation</name>
        <dbReference type="ChEBI" id="CHEBI:24875"/>
    </ligand>
</feature>
<feature type="binding site" evidence="1">
    <location>
        <position position="133"/>
    </location>
    <ligand>
        <name>Fe cation</name>
        <dbReference type="ChEBI" id="CHEBI:24875"/>
    </ligand>
</feature>
<feature type="binding site" evidence="1">
    <location>
        <position position="137"/>
    </location>
    <ligand>
        <name>Fe cation</name>
        <dbReference type="ChEBI" id="CHEBI:24875"/>
    </ligand>
</feature>
<dbReference type="EC" id="3.5.1.88" evidence="1"/>
<dbReference type="EMBL" id="CP000720">
    <property type="protein sequence ID" value="ABS49046.1"/>
    <property type="molecule type" value="Genomic_DNA"/>
</dbReference>
<dbReference type="RefSeq" id="WP_002209021.1">
    <property type="nucleotide sequence ID" value="NC_009708.1"/>
</dbReference>
<dbReference type="SMR" id="A7FNK2"/>
<dbReference type="GeneID" id="57974362"/>
<dbReference type="KEGG" id="ypi:YpsIP31758_3882"/>
<dbReference type="HOGENOM" id="CLU_061901_2_1_6"/>
<dbReference type="Proteomes" id="UP000002412">
    <property type="component" value="Chromosome"/>
</dbReference>
<dbReference type="GO" id="GO:0046872">
    <property type="term" value="F:metal ion binding"/>
    <property type="evidence" value="ECO:0007669"/>
    <property type="project" value="UniProtKB-KW"/>
</dbReference>
<dbReference type="GO" id="GO:0042586">
    <property type="term" value="F:peptide deformylase activity"/>
    <property type="evidence" value="ECO:0007669"/>
    <property type="project" value="UniProtKB-UniRule"/>
</dbReference>
<dbReference type="GO" id="GO:0043686">
    <property type="term" value="P:co-translational protein modification"/>
    <property type="evidence" value="ECO:0007669"/>
    <property type="project" value="TreeGrafter"/>
</dbReference>
<dbReference type="GO" id="GO:0006412">
    <property type="term" value="P:translation"/>
    <property type="evidence" value="ECO:0007669"/>
    <property type="project" value="UniProtKB-UniRule"/>
</dbReference>
<dbReference type="CDD" id="cd00487">
    <property type="entry name" value="Pep_deformylase"/>
    <property type="match status" value="1"/>
</dbReference>
<dbReference type="FunFam" id="3.90.45.10:FF:000001">
    <property type="entry name" value="Peptide deformylase"/>
    <property type="match status" value="1"/>
</dbReference>
<dbReference type="Gene3D" id="3.90.45.10">
    <property type="entry name" value="Peptide deformylase"/>
    <property type="match status" value="1"/>
</dbReference>
<dbReference type="HAMAP" id="MF_00163">
    <property type="entry name" value="Pep_deformylase"/>
    <property type="match status" value="1"/>
</dbReference>
<dbReference type="InterPro" id="IPR023635">
    <property type="entry name" value="Peptide_deformylase"/>
</dbReference>
<dbReference type="InterPro" id="IPR036821">
    <property type="entry name" value="Peptide_deformylase_sf"/>
</dbReference>
<dbReference type="NCBIfam" id="TIGR00079">
    <property type="entry name" value="pept_deformyl"/>
    <property type="match status" value="1"/>
</dbReference>
<dbReference type="NCBIfam" id="NF001159">
    <property type="entry name" value="PRK00150.1-3"/>
    <property type="match status" value="1"/>
</dbReference>
<dbReference type="PANTHER" id="PTHR10458">
    <property type="entry name" value="PEPTIDE DEFORMYLASE"/>
    <property type="match status" value="1"/>
</dbReference>
<dbReference type="PANTHER" id="PTHR10458:SF21">
    <property type="entry name" value="PEPTIDE DEFORMYLASE"/>
    <property type="match status" value="1"/>
</dbReference>
<dbReference type="Pfam" id="PF01327">
    <property type="entry name" value="Pep_deformylase"/>
    <property type="match status" value="1"/>
</dbReference>
<dbReference type="PIRSF" id="PIRSF004749">
    <property type="entry name" value="Pep_def"/>
    <property type="match status" value="1"/>
</dbReference>
<dbReference type="PRINTS" id="PR01576">
    <property type="entry name" value="PDEFORMYLASE"/>
</dbReference>
<dbReference type="SUPFAM" id="SSF56420">
    <property type="entry name" value="Peptide deformylase"/>
    <property type="match status" value="1"/>
</dbReference>
<protein>
    <recommendedName>
        <fullName evidence="1">Peptide deformylase</fullName>
        <shortName evidence="1">PDF</shortName>
        <ecNumber evidence="1">3.5.1.88</ecNumber>
    </recommendedName>
    <alternativeName>
        <fullName evidence="1">Polypeptide deformylase</fullName>
    </alternativeName>
</protein>
<organism>
    <name type="scientific">Yersinia pseudotuberculosis serotype O:1b (strain IP 31758)</name>
    <dbReference type="NCBI Taxonomy" id="349747"/>
    <lineage>
        <taxon>Bacteria</taxon>
        <taxon>Pseudomonadati</taxon>
        <taxon>Pseudomonadota</taxon>
        <taxon>Gammaproteobacteria</taxon>
        <taxon>Enterobacterales</taxon>
        <taxon>Yersiniaceae</taxon>
        <taxon>Yersinia</taxon>
    </lineage>
</organism>
<gene>
    <name evidence="1" type="primary">def</name>
    <name type="ordered locus">YpsIP31758_3882</name>
</gene>
<name>DEF_YERP3</name>
<sequence>MSVLQVLHYPDERLRKIAAPVKEVNGEIQRIVDDMFETMYAEEGIGLAATQVDVHQQIIVIDISENRDQRLVLINPELLEKSGETGIEEGCLSIPEQRALVPRAEKVKIRALDRDGKPFELETDGLLAICIQHEMDHLIGKLFVDYLSPLKRQRIRQKLEKMAKLNARAN</sequence>